<keyword id="KW-0133">Cell shape</keyword>
<keyword id="KW-0961">Cell wall biogenesis/degradation</keyword>
<keyword id="KW-0413">Isomerase</keyword>
<keyword id="KW-0573">Peptidoglycan synthesis</keyword>
<keyword id="KW-1185">Reference proteome</keyword>
<protein>
    <recommendedName>
        <fullName evidence="1">Glutamate racemase</fullName>
        <ecNumber evidence="1">5.1.1.3</ecNumber>
    </recommendedName>
</protein>
<sequence>MANEHAIGFMDSGVGGLTVVKQALKQLPRETVYFIGDQARLPYGPRPAEQVRTFSFQMADFLMAKQIKMLVIACNTATAAALPALRQQLSIPVIGVIAPGSRAALKASHRNRIGVIATEGTIRSNAYRDAILTKDPTATVVSQACPKFVPLVESNEYQSTVAKRVVAETLKQLKKQDVDTLVLGCTHYPLLRPLIQNVMGPGVTLIDSGAETVNDVSAVLDYLDIANDRSTKRYPDEYYTTGAADQFEAIARNWLGQPDFHAQHIDLGSEAND</sequence>
<accession>Q88V19</accession>
<accession>F9UQI7</accession>
<name>MURI_LACPL</name>
<organism>
    <name type="scientific">Lactiplantibacillus plantarum (strain ATCC BAA-793 / NCIMB 8826 / WCFS1)</name>
    <name type="common">Lactobacillus plantarum</name>
    <dbReference type="NCBI Taxonomy" id="220668"/>
    <lineage>
        <taxon>Bacteria</taxon>
        <taxon>Bacillati</taxon>
        <taxon>Bacillota</taxon>
        <taxon>Bacilli</taxon>
        <taxon>Lactobacillales</taxon>
        <taxon>Lactobacillaceae</taxon>
        <taxon>Lactiplantibacillus</taxon>
    </lineage>
</organism>
<reference key="1">
    <citation type="journal article" date="2003" name="Proc. Natl. Acad. Sci. U.S.A.">
        <title>Complete genome sequence of Lactobacillus plantarum WCFS1.</title>
        <authorList>
            <person name="Kleerebezem M."/>
            <person name="Boekhorst J."/>
            <person name="van Kranenburg R."/>
            <person name="Molenaar D."/>
            <person name="Kuipers O.P."/>
            <person name="Leer R."/>
            <person name="Tarchini R."/>
            <person name="Peters S.A."/>
            <person name="Sandbrink H.M."/>
            <person name="Fiers M.W.E.J."/>
            <person name="Stiekema W."/>
            <person name="Klein Lankhorst R.M."/>
            <person name="Bron P.A."/>
            <person name="Hoffer S.M."/>
            <person name="Nierop Groot M.N."/>
            <person name="Kerkhoven R."/>
            <person name="De Vries M."/>
            <person name="Ursing B."/>
            <person name="De Vos W.M."/>
            <person name="Siezen R.J."/>
        </authorList>
    </citation>
    <scope>NUCLEOTIDE SEQUENCE [LARGE SCALE GENOMIC DNA]</scope>
    <source>
        <strain>ATCC BAA-793 / NCIMB 8826 / WCFS1</strain>
    </source>
</reference>
<reference key="2">
    <citation type="journal article" date="2012" name="J. Bacteriol.">
        <title>Complete resequencing and reannotation of the Lactobacillus plantarum WCFS1 genome.</title>
        <authorList>
            <person name="Siezen R.J."/>
            <person name="Francke C."/>
            <person name="Renckens B."/>
            <person name="Boekhorst J."/>
            <person name="Wels M."/>
            <person name="Kleerebezem M."/>
            <person name="van Hijum S.A."/>
        </authorList>
    </citation>
    <scope>NUCLEOTIDE SEQUENCE [LARGE SCALE GENOMIC DNA]</scope>
    <scope>GENOME REANNOTATION</scope>
    <source>
        <strain>ATCC BAA-793 / NCIMB 8826 / WCFS1</strain>
    </source>
</reference>
<feature type="chain" id="PRO_0000095481" description="Glutamate racemase">
    <location>
        <begin position="1"/>
        <end position="273"/>
    </location>
</feature>
<feature type="active site" description="Proton donor/acceptor" evidence="1">
    <location>
        <position position="74"/>
    </location>
</feature>
<feature type="active site" description="Proton donor/acceptor" evidence="1">
    <location>
        <position position="185"/>
    </location>
</feature>
<feature type="binding site" evidence="1">
    <location>
        <begin position="11"/>
        <end position="12"/>
    </location>
    <ligand>
        <name>substrate</name>
    </ligand>
</feature>
<feature type="binding site" evidence="1">
    <location>
        <begin position="43"/>
        <end position="44"/>
    </location>
    <ligand>
        <name>substrate</name>
    </ligand>
</feature>
<feature type="binding site" evidence="1">
    <location>
        <begin position="75"/>
        <end position="76"/>
    </location>
    <ligand>
        <name>substrate</name>
    </ligand>
</feature>
<feature type="binding site" evidence="1">
    <location>
        <begin position="186"/>
        <end position="187"/>
    </location>
    <ligand>
        <name>substrate</name>
    </ligand>
</feature>
<comment type="function">
    <text evidence="1">Provides the (R)-glutamate required for cell wall biosynthesis.</text>
</comment>
<comment type="catalytic activity">
    <reaction evidence="1">
        <text>L-glutamate = D-glutamate</text>
        <dbReference type="Rhea" id="RHEA:12813"/>
        <dbReference type="ChEBI" id="CHEBI:29985"/>
        <dbReference type="ChEBI" id="CHEBI:29986"/>
        <dbReference type="EC" id="5.1.1.3"/>
    </reaction>
</comment>
<comment type="pathway">
    <text evidence="1">Cell wall biogenesis; peptidoglycan biosynthesis.</text>
</comment>
<comment type="similarity">
    <text evidence="1">Belongs to the aspartate/glutamate racemases family.</text>
</comment>
<proteinExistence type="inferred from homology"/>
<dbReference type="EC" id="5.1.1.3" evidence="1"/>
<dbReference type="EMBL" id="AL935263">
    <property type="protein sequence ID" value="CCC79476.1"/>
    <property type="molecule type" value="Genomic_DNA"/>
</dbReference>
<dbReference type="RefSeq" id="YP_004889990.1">
    <property type="nucleotide sequence ID" value="NC_004567.2"/>
</dbReference>
<dbReference type="SMR" id="Q88V19"/>
<dbReference type="STRING" id="220668.lp_2268"/>
<dbReference type="EnsemblBacteria" id="CCC79476">
    <property type="protein sequence ID" value="CCC79476"/>
    <property type="gene ID" value="lp_2268"/>
</dbReference>
<dbReference type="KEGG" id="lpl:lp_2268"/>
<dbReference type="PATRIC" id="fig|220668.9.peg.1919"/>
<dbReference type="eggNOG" id="COG0796">
    <property type="taxonomic scope" value="Bacteria"/>
</dbReference>
<dbReference type="HOGENOM" id="CLU_052344_0_2_9"/>
<dbReference type="OrthoDB" id="9801055at2"/>
<dbReference type="PhylomeDB" id="Q88V19"/>
<dbReference type="UniPathway" id="UPA00219"/>
<dbReference type="Proteomes" id="UP000000432">
    <property type="component" value="Chromosome"/>
</dbReference>
<dbReference type="GO" id="GO:0008881">
    <property type="term" value="F:glutamate racemase activity"/>
    <property type="evidence" value="ECO:0007669"/>
    <property type="project" value="UniProtKB-UniRule"/>
</dbReference>
<dbReference type="GO" id="GO:0071555">
    <property type="term" value="P:cell wall organization"/>
    <property type="evidence" value="ECO:0007669"/>
    <property type="project" value="UniProtKB-KW"/>
</dbReference>
<dbReference type="GO" id="GO:0009252">
    <property type="term" value="P:peptidoglycan biosynthetic process"/>
    <property type="evidence" value="ECO:0007669"/>
    <property type="project" value="UniProtKB-UniRule"/>
</dbReference>
<dbReference type="GO" id="GO:0008360">
    <property type="term" value="P:regulation of cell shape"/>
    <property type="evidence" value="ECO:0007669"/>
    <property type="project" value="UniProtKB-KW"/>
</dbReference>
<dbReference type="FunFam" id="3.40.50.1860:FF:000002">
    <property type="entry name" value="Glutamate racemase"/>
    <property type="match status" value="1"/>
</dbReference>
<dbReference type="Gene3D" id="3.40.50.1860">
    <property type="match status" value="2"/>
</dbReference>
<dbReference type="HAMAP" id="MF_00258">
    <property type="entry name" value="Glu_racemase"/>
    <property type="match status" value="1"/>
</dbReference>
<dbReference type="InterPro" id="IPR015942">
    <property type="entry name" value="Asp/Glu/hydantoin_racemase"/>
</dbReference>
<dbReference type="InterPro" id="IPR001920">
    <property type="entry name" value="Asp/Glu_race"/>
</dbReference>
<dbReference type="InterPro" id="IPR018187">
    <property type="entry name" value="Asp/Glu_racemase_AS_1"/>
</dbReference>
<dbReference type="InterPro" id="IPR033134">
    <property type="entry name" value="Asp/Glu_racemase_AS_2"/>
</dbReference>
<dbReference type="InterPro" id="IPR004391">
    <property type="entry name" value="Glu_race"/>
</dbReference>
<dbReference type="NCBIfam" id="TIGR00067">
    <property type="entry name" value="glut_race"/>
    <property type="match status" value="1"/>
</dbReference>
<dbReference type="NCBIfam" id="NF002035">
    <property type="entry name" value="PRK00865.1-3"/>
    <property type="match status" value="1"/>
</dbReference>
<dbReference type="PANTHER" id="PTHR21198">
    <property type="entry name" value="GLUTAMATE RACEMASE"/>
    <property type="match status" value="1"/>
</dbReference>
<dbReference type="PANTHER" id="PTHR21198:SF2">
    <property type="entry name" value="GLUTAMATE RACEMASE"/>
    <property type="match status" value="1"/>
</dbReference>
<dbReference type="Pfam" id="PF01177">
    <property type="entry name" value="Asp_Glu_race"/>
    <property type="match status" value="1"/>
</dbReference>
<dbReference type="SUPFAM" id="SSF53681">
    <property type="entry name" value="Aspartate/glutamate racemase"/>
    <property type="match status" value="2"/>
</dbReference>
<dbReference type="PROSITE" id="PS00923">
    <property type="entry name" value="ASP_GLU_RACEMASE_1"/>
    <property type="match status" value="1"/>
</dbReference>
<dbReference type="PROSITE" id="PS00924">
    <property type="entry name" value="ASP_GLU_RACEMASE_2"/>
    <property type="match status" value="1"/>
</dbReference>
<gene>
    <name evidence="1" type="primary">murI</name>
    <name type="ordered locus">lp_2268</name>
</gene>
<evidence type="ECO:0000255" key="1">
    <source>
        <dbReference type="HAMAP-Rule" id="MF_00258"/>
    </source>
</evidence>